<proteinExistence type="evidence at protein level"/>
<accession>O74191</accession>
<accession>Q9UTU5</accession>
<comment type="function">
    <text evidence="1 5">PPIase that acts as a histone chaperone (PubMed:14981505). Histone proline isomerase that increases the rate of cis-trans isomerization at prolines on the histone H3 N-terminal tail. Proline isomerization influences H3 methylation thereby regulating gene expression (By similarity).</text>
</comment>
<comment type="catalytic activity">
    <reaction evidence="4">
        <text>[protein]-peptidylproline (omega=180) = [protein]-peptidylproline (omega=0)</text>
        <dbReference type="Rhea" id="RHEA:16237"/>
        <dbReference type="Rhea" id="RHEA-COMP:10747"/>
        <dbReference type="Rhea" id="RHEA-COMP:10748"/>
        <dbReference type="ChEBI" id="CHEBI:83833"/>
        <dbReference type="ChEBI" id="CHEBI:83834"/>
        <dbReference type="EC" id="5.2.1.8"/>
    </reaction>
</comment>
<comment type="subcellular location">
    <subcellularLocation>
        <location evidence="4 5">Nucleus</location>
    </subcellularLocation>
    <subcellularLocation>
        <location evidence="6">Nucleus</location>
        <location evidence="6">Nucleolus</location>
    </subcellularLocation>
</comment>
<comment type="similarity">
    <text evidence="10">Belongs to the FKBP-type PPIase family. FKBP3/4 subfamily.</text>
</comment>
<name>FKBP4_SCHPO</name>
<gene>
    <name evidence="8" type="primary">fkbp39</name>
    <name evidence="11" type="ORF">SPBC1347.02</name>
</gene>
<evidence type="ECO:0000250" key="1">
    <source>
        <dbReference type="UniProtKB" id="Q06205"/>
    </source>
</evidence>
<evidence type="ECO:0000255" key="2">
    <source>
        <dbReference type="PROSITE-ProRule" id="PRU00277"/>
    </source>
</evidence>
<evidence type="ECO:0000256" key="3">
    <source>
        <dbReference type="SAM" id="MobiDB-lite"/>
    </source>
</evidence>
<evidence type="ECO:0000269" key="4">
    <source>
    </source>
</evidence>
<evidence type="ECO:0000269" key="5">
    <source>
    </source>
</evidence>
<evidence type="ECO:0000269" key="6">
    <source>
    </source>
</evidence>
<evidence type="ECO:0000269" key="7">
    <source>
    </source>
</evidence>
<evidence type="ECO:0000303" key="8">
    <source>
    </source>
</evidence>
<evidence type="ECO:0000303" key="9">
    <source>
    </source>
</evidence>
<evidence type="ECO:0000305" key="10"/>
<evidence type="ECO:0000312" key="11">
    <source>
        <dbReference type="PomBase" id="SPBC1347.02"/>
    </source>
</evidence>
<sequence>MSLPIAVYSLSVKGKDVPAVEESTDASIHLTMASIDAGEKSNKPTTLLVKVRPRIPVEDEDDEELDEQMQELLEESQREFVLCTLKPGSLYQQPLNLTITPGDEVFFSASGDATIHLSGNFLVDEEDEEEEESDEDYDLSPTEEDLVETVSGDEESEEESESEDNSASEEDELDSAPAKKAQVKKKRTKDESEQEEAASPKKNNTKKQKVEGTPVKEKKVAFAEKLEQGPTGPAAKKEKQQASSNAPSSPKTRTLKGGVVVTDVKTGSGASATNGKKVEMRYIGKLENGKVFDKNTKGKPFAFILGRGEVIRGWDVGVAGMQEGGERKITIPAPMAYGNQSIPGIPKNSTLVFEVKLVRVH</sequence>
<dbReference type="EC" id="5.2.1.8" evidence="4"/>
<dbReference type="EMBL" id="AF017990">
    <property type="protein sequence ID" value="AAC29477.1"/>
    <property type="molecule type" value="Genomic_DNA"/>
</dbReference>
<dbReference type="EMBL" id="CU329671">
    <property type="protein sequence ID" value="CAB37433.1"/>
    <property type="molecule type" value="Genomic_DNA"/>
</dbReference>
<dbReference type="EMBL" id="AB027991">
    <property type="protein sequence ID" value="BAA87295.1"/>
    <property type="molecule type" value="Genomic_DNA"/>
</dbReference>
<dbReference type="PIR" id="JC7159">
    <property type="entry name" value="T43536"/>
</dbReference>
<dbReference type="RefSeq" id="NP_596694.1">
    <property type="nucleotide sequence ID" value="NM_001022618.2"/>
</dbReference>
<dbReference type="SMR" id="O74191"/>
<dbReference type="BioGRID" id="276362">
    <property type="interactions" value="177"/>
</dbReference>
<dbReference type="FunCoup" id="O74191">
    <property type="interactions" value="48"/>
</dbReference>
<dbReference type="STRING" id="284812.O74191"/>
<dbReference type="iPTMnet" id="O74191"/>
<dbReference type="PaxDb" id="4896-SPBC1347.02.1"/>
<dbReference type="EnsemblFungi" id="SPBC1347.02.1">
    <property type="protein sequence ID" value="SPBC1347.02.1:pep"/>
    <property type="gene ID" value="SPBC1347.02"/>
</dbReference>
<dbReference type="GeneID" id="2539812"/>
<dbReference type="KEGG" id="spo:2539812"/>
<dbReference type="PomBase" id="SPBC1347.02">
    <property type="gene designation" value="fkbp39"/>
</dbReference>
<dbReference type="VEuPathDB" id="FungiDB:SPBC1347.02"/>
<dbReference type="eggNOG" id="KOG0552">
    <property type="taxonomic scope" value="Eukaryota"/>
</dbReference>
<dbReference type="HOGENOM" id="CLU_022297_3_1_1"/>
<dbReference type="InParanoid" id="O74191"/>
<dbReference type="OMA" id="KVEMRYI"/>
<dbReference type="PhylomeDB" id="O74191"/>
<dbReference type="PRO" id="PR:O74191"/>
<dbReference type="Proteomes" id="UP000002485">
    <property type="component" value="Chromosome II"/>
</dbReference>
<dbReference type="GO" id="GO:0000785">
    <property type="term" value="C:chromatin"/>
    <property type="evidence" value="ECO:0000318"/>
    <property type="project" value="GO_Central"/>
</dbReference>
<dbReference type="GO" id="GO:0030874">
    <property type="term" value="C:nucleolar chromatin"/>
    <property type="evidence" value="ECO:0000314"/>
    <property type="project" value="PomBase"/>
</dbReference>
<dbReference type="GO" id="GO:0005730">
    <property type="term" value="C:nucleolus"/>
    <property type="evidence" value="ECO:0007005"/>
    <property type="project" value="PomBase"/>
</dbReference>
<dbReference type="GO" id="GO:0030684">
    <property type="term" value="C:preribosome"/>
    <property type="evidence" value="ECO:0000314"/>
    <property type="project" value="PomBase"/>
</dbReference>
<dbReference type="GO" id="GO:0140693">
    <property type="term" value="F:molecular condensate scaffold activity"/>
    <property type="evidence" value="ECO:0000269"/>
    <property type="project" value="PomBase"/>
</dbReference>
<dbReference type="GO" id="GO:0031491">
    <property type="term" value="F:nucleosome binding"/>
    <property type="evidence" value="ECO:0000314"/>
    <property type="project" value="PomBase"/>
</dbReference>
<dbReference type="GO" id="GO:0003755">
    <property type="term" value="F:peptidyl-prolyl cis-trans isomerase activity"/>
    <property type="evidence" value="ECO:0000269"/>
    <property type="project" value="PomBase"/>
</dbReference>
<dbReference type="GO" id="GO:0000182">
    <property type="term" value="F:rDNA binding"/>
    <property type="evidence" value="ECO:0000314"/>
    <property type="project" value="PomBase"/>
</dbReference>
<dbReference type="GO" id="GO:0003723">
    <property type="term" value="F:RNA binding"/>
    <property type="evidence" value="ECO:0000269"/>
    <property type="project" value="PomBase"/>
</dbReference>
<dbReference type="GO" id="GO:0034080">
    <property type="term" value="P:CENP-A containing chromatin assembly"/>
    <property type="evidence" value="ECO:0000315"/>
    <property type="project" value="PomBase"/>
</dbReference>
<dbReference type="GO" id="GO:0042273">
    <property type="term" value="P:ribosomal large subunit biogenesis"/>
    <property type="evidence" value="ECO:0000314"/>
    <property type="project" value="PomBase"/>
</dbReference>
<dbReference type="GO" id="GO:0042274">
    <property type="term" value="P:ribosomal small subunit biogenesis"/>
    <property type="evidence" value="ECO:0000314"/>
    <property type="project" value="PomBase"/>
</dbReference>
<dbReference type="FunFam" id="2.60.120.340:FF:000006">
    <property type="entry name" value="FK506-binding protein"/>
    <property type="match status" value="1"/>
</dbReference>
<dbReference type="FunFam" id="3.10.50.40:FF:000006">
    <property type="entry name" value="Peptidyl-prolyl cis-trans isomerase"/>
    <property type="match status" value="1"/>
</dbReference>
<dbReference type="Gene3D" id="3.10.50.40">
    <property type="match status" value="1"/>
</dbReference>
<dbReference type="Gene3D" id="2.60.120.340">
    <property type="entry name" value="Nucleoplasmin core domain"/>
    <property type="match status" value="1"/>
</dbReference>
<dbReference type="InterPro" id="IPR041232">
    <property type="entry name" value="NPL"/>
</dbReference>
<dbReference type="InterPro" id="IPR046357">
    <property type="entry name" value="PPIase_dom_sf"/>
</dbReference>
<dbReference type="InterPro" id="IPR001179">
    <property type="entry name" value="PPIase_FKBP_dom"/>
</dbReference>
<dbReference type="InterPro" id="IPR023566">
    <property type="entry name" value="PPIase_Fpr3/Fpr4-like"/>
</dbReference>
<dbReference type="PANTHER" id="PTHR43811:SF19">
    <property type="entry name" value="39 KDA FK506-BINDING NUCLEAR PROTEIN"/>
    <property type="match status" value="1"/>
</dbReference>
<dbReference type="PANTHER" id="PTHR43811">
    <property type="entry name" value="FKBP-TYPE PEPTIDYL-PROLYL CIS-TRANS ISOMERASE FKPA"/>
    <property type="match status" value="1"/>
</dbReference>
<dbReference type="Pfam" id="PF00254">
    <property type="entry name" value="FKBP_C"/>
    <property type="match status" value="1"/>
</dbReference>
<dbReference type="Pfam" id="PF17800">
    <property type="entry name" value="NPL"/>
    <property type="match status" value="1"/>
</dbReference>
<dbReference type="PIRSF" id="PIRSF001473">
    <property type="entry name" value="FK506-bp_FPR3"/>
    <property type="match status" value="1"/>
</dbReference>
<dbReference type="SUPFAM" id="SSF54534">
    <property type="entry name" value="FKBP-like"/>
    <property type="match status" value="1"/>
</dbReference>
<dbReference type="PROSITE" id="PS50059">
    <property type="entry name" value="FKBP_PPIASE"/>
    <property type="match status" value="1"/>
</dbReference>
<keyword id="KW-0143">Chaperone</keyword>
<keyword id="KW-0413">Isomerase</keyword>
<keyword id="KW-0539">Nucleus</keyword>
<keyword id="KW-0597">Phosphoprotein</keyword>
<keyword id="KW-1185">Reference proteome</keyword>
<keyword id="KW-0697">Rotamase</keyword>
<feature type="chain" id="PRO_0000075315" description="FK506-binding protein 39 kDa">
    <location>
        <begin position="1"/>
        <end position="361"/>
    </location>
</feature>
<feature type="domain" description="PPIase FKBP-type" evidence="2">
    <location>
        <begin position="275"/>
        <end position="361"/>
    </location>
</feature>
<feature type="region of interest" description="Disordered" evidence="3">
    <location>
        <begin position="122"/>
        <end position="256"/>
    </location>
</feature>
<feature type="compositionally biased region" description="Acidic residues" evidence="3">
    <location>
        <begin position="123"/>
        <end position="174"/>
    </location>
</feature>
<feature type="compositionally biased region" description="Basic and acidic residues" evidence="3">
    <location>
        <begin position="208"/>
        <end position="227"/>
    </location>
</feature>
<feature type="compositionally biased region" description="Polar residues" evidence="3">
    <location>
        <begin position="241"/>
        <end position="252"/>
    </location>
</feature>
<feature type="modified residue" description="Phosphoserine" evidence="7">
    <location>
        <position position="192"/>
    </location>
</feature>
<feature type="modified residue" description="Phosphothreonine" evidence="7">
    <location>
        <position position="213"/>
    </location>
</feature>
<feature type="modified residue" description="Phosphoserine" evidence="7">
    <location>
        <position position="249"/>
    </location>
</feature>
<protein>
    <recommendedName>
        <fullName>FK506-binding protein 39 kDa</fullName>
        <ecNumber evidence="4">5.2.1.8</ecNumber>
    </recommendedName>
    <alternativeName>
        <fullName evidence="9">Histone proline isomerase</fullName>
    </alternativeName>
    <alternativeName>
        <fullName>Peptidyl-prolyl cis-trans isomerase</fullName>
        <shortName>PPIase</shortName>
    </alternativeName>
    <alternativeName>
        <fullName>Rotamase</fullName>
    </alternativeName>
</protein>
<reference key="1">
    <citation type="journal article" date="1999" name="J. Biochem.">
        <title>Relationship between the subcellular localization and structures of catalytic domains of FKBP-type PPIases.</title>
        <authorList>
            <person name="Himukai R."/>
            <person name="Kuzuhara T."/>
            <person name="Horikoshi M."/>
        </authorList>
    </citation>
    <scope>NUCLEOTIDE SEQUENCE [GENOMIC DNA]</scope>
    <source>
        <strain>JY741</strain>
    </source>
</reference>
<reference key="2">
    <citation type="journal article" date="2002" name="Nature">
        <title>The genome sequence of Schizosaccharomyces pombe.</title>
        <authorList>
            <person name="Wood V."/>
            <person name="Gwilliam R."/>
            <person name="Rajandream M.A."/>
            <person name="Lyne M.H."/>
            <person name="Lyne R."/>
            <person name="Stewart A."/>
            <person name="Sgouros J.G."/>
            <person name="Peat N."/>
            <person name="Hayles J."/>
            <person name="Baker S.G."/>
            <person name="Basham D."/>
            <person name="Bowman S."/>
            <person name="Brooks K."/>
            <person name="Brown D."/>
            <person name="Brown S."/>
            <person name="Chillingworth T."/>
            <person name="Churcher C.M."/>
            <person name="Collins M."/>
            <person name="Connor R."/>
            <person name="Cronin A."/>
            <person name="Davis P."/>
            <person name="Feltwell T."/>
            <person name="Fraser A."/>
            <person name="Gentles S."/>
            <person name="Goble A."/>
            <person name="Hamlin N."/>
            <person name="Harris D.E."/>
            <person name="Hidalgo J."/>
            <person name="Hodgson G."/>
            <person name="Holroyd S."/>
            <person name="Hornsby T."/>
            <person name="Howarth S."/>
            <person name="Huckle E.J."/>
            <person name="Hunt S."/>
            <person name="Jagels K."/>
            <person name="James K.D."/>
            <person name="Jones L."/>
            <person name="Jones M."/>
            <person name="Leather S."/>
            <person name="McDonald S."/>
            <person name="McLean J."/>
            <person name="Mooney P."/>
            <person name="Moule S."/>
            <person name="Mungall K.L."/>
            <person name="Murphy L.D."/>
            <person name="Niblett D."/>
            <person name="Odell C."/>
            <person name="Oliver K."/>
            <person name="O'Neil S."/>
            <person name="Pearson D."/>
            <person name="Quail M.A."/>
            <person name="Rabbinowitsch E."/>
            <person name="Rutherford K.M."/>
            <person name="Rutter S."/>
            <person name="Saunders D."/>
            <person name="Seeger K."/>
            <person name="Sharp S."/>
            <person name="Skelton J."/>
            <person name="Simmonds M.N."/>
            <person name="Squares R."/>
            <person name="Squares S."/>
            <person name="Stevens K."/>
            <person name="Taylor K."/>
            <person name="Taylor R.G."/>
            <person name="Tivey A."/>
            <person name="Walsh S.V."/>
            <person name="Warren T."/>
            <person name="Whitehead S."/>
            <person name="Woodward J.R."/>
            <person name="Volckaert G."/>
            <person name="Aert R."/>
            <person name="Robben J."/>
            <person name="Grymonprez B."/>
            <person name="Weltjens I."/>
            <person name="Vanstreels E."/>
            <person name="Rieger M."/>
            <person name="Schaefer M."/>
            <person name="Mueller-Auer S."/>
            <person name="Gabel C."/>
            <person name="Fuchs M."/>
            <person name="Duesterhoeft A."/>
            <person name="Fritzc C."/>
            <person name="Holzer E."/>
            <person name="Moestl D."/>
            <person name="Hilbert H."/>
            <person name="Borzym K."/>
            <person name="Langer I."/>
            <person name="Beck A."/>
            <person name="Lehrach H."/>
            <person name="Reinhardt R."/>
            <person name="Pohl T.M."/>
            <person name="Eger P."/>
            <person name="Zimmermann W."/>
            <person name="Wedler H."/>
            <person name="Wambutt R."/>
            <person name="Purnelle B."/>
            <person name="Goffeau A."/>
            <person name="Cadieu E."/>
            <person name="Dreano S."/>
            <person name="Gloux S."/>
            <person name="Lelaure V."/>
            <person name="Mottier S."/>
            <person name="Galibert F."/>
            <person name="Aves S.J."/>
            <person name="Xiang Z."/>
            <person name="Hunt C."/>
            <person name="Moore K."/>
            <person name="Hurst S.M."/>
            <person name="Lucas M."/>
            <person name="Rochet M."/>
            <person name="Gaillardin C."/>
            <person name="Tallada V.A."/>
            <person name="Garzon A."/>
            <person name="Thode G."/>
            <person name="Daga R.R."/>
            <person name="Cruzado L."/>
            <person name="Jimenez J."/>
            <person name="Sanchez M."/>
            <person name="del Rey F."/>
            <person name="Benito J."/>
            <person name="Dominguez A."/>
            <person name="Revuelta J.L."/>
            <person name="Moreno S."/>
            <person name="Armstrong J."/>
            <person name="Forsburg S.L."/>
            <person name="Cerutti L."/>
            <person name="Lowe T."/>
            <person name="McCombie W.R."/>
            <person name="Paulsen I."/>
            <person name="Potashkin J."/>
            <person name="Shpakovski G.V."/>
            <person name="Ussery D."/>
            <person name="Barrell B.G."/>
            <person name="Nurse P."/>
        </authorList>
    </citation>
    <scope>NUCLEOTIDE SEQUENCE [LARGE SCALE GENOMIC DNA]</scope>
    <source>
        <strain>972 / ATCC 24843</strain>
    </source>
</reference>
<reference key="3">
    <citation type="journal article" date="2000" name="Genes Cells">
        <title>Large-scale screening of intracellular protein localization in living fission yeast cells by the use of a GFP-fusion genomic DNA library.</title>
        <authorList>
            <person name="Ding D.-Q."/>
            <person name="Tomita Y."/>
            <person name="Yamamoto A."/>
            <person name="Chikashige Y."/>
            <person name="Haraguchi T."/>
            <person name="Hiraoka Y."/>
        </authorList>
    </citation>
    <scope>NUCLEOTIDE SEQUENCE [LARGE SCALE GENOMIC DNA] OF 1-145</scope>
    <source>
        <strain>ATCC 38364 / 968</strain>
    </source>
</reference>
<reference key="4">
    <citation type="journal article" date="2004" name="Nat. Struct. Mol. Biol.">
        <title>A nuclear FK506-binding protein is a histone chaperone regulating rDNA silencing.</title>
        <authorList>
            <person name="Kuzuhara T."/>
            <person name="Horikoshi M."/>
        </authorList>
    </citation>
    <scope>FUNCTION</scope>
    <scope>SUBCELLULAR LOCATION</scope>
</reference>
<reference key="5">
    <citation type="journal article" date="2006" name="Nat. Biotechnol.">
        <title>ORFeome cloning and global analysis of protein localization in the fission yeast Schizosaccharomyces pombe.</title>
        <authorList>
            <person name="Matsuyama A."/>
            <person name="Arai R."/>
            <person name="Yashiroda Y."/>
            <person name="Shirai A."/>
            <person name="Kamata A."/>
            <person name="Sekido S."/>
            <person name="Kobayashi Y."/>
            <person name="Hashimoto A."/>
            <person name="Hamamoto M."/>
            <person name="Hiraoka Y."/>
            <person name="Horinouchi S."/>
            <person name="Yoshida M."/>
        </authorList>
    </citation>
    <scope>SUBCELLULAR LOCATION [LARGE SCALE ANALYSIS]</scope>
</reference>
<reference key="6">
    <citation type="journal article" date="2008" name="J. Proteome Res.">
        <title>Phosphoproteome analysis of fission yeast.</title>
        <authorList>
            <person name="Wilson-Grady J.T."/>
            <person name="Villen J."/>
            <person name="Gygi S.P."/>
        </authorList>
    </citation>
    <scope>PHOSPHORYLATION [LARGE SCALE ANALYSIS] AT SER-192; THR-213 AND SER-249</scope>
    <scope>IDENTIFICATION BY MASS SPECTROMETRY</scope>
</reference>
<organism>
    <name type="scientific">Schizosaccharomyces pombe (strain 972 / ATCC 24843)</name>
    <name type="common">Fission yeast</name>
    <dbReference type="NCBI Taxonomy" id="284812"/>
    <lineage>
        <taxon>Eukaryota</taxon>
        <taxon>Fungi</taxon>
        <taxon>Dikarya</taxon>
        <taxon>Ascomycota</taxon>
        <taxon>Taphrinomycotina</taxon>
        <taxon>Schizosaccharomycetes</taxon>
        <taxon>Schizosaccharomycetales</taxon>
        <taxon>Schizosaccharomycetaceae</taxon>
        <taxon>Schizosaccharomyces</taxon>
    </lineage>
</organism>